<sequence>MTLLLLGAVLLVAQPQLVPSHPAAPGPGLKQQGLLRKVIILPEDTGEGAATNGSTQQLPQTIIIGVRKGGTRALLEMLSLHPDVAAAENEVHFFDWEEHYSQGLGWYLTQMPFSSPHQLTVEKTPAYFTSPKVPERIHSMNPTIRLLLILRDPSERVLSDYTQVLYNHLQKHKPYPPIEDLLMRDGRLNVDYKALNRSLYHAHMLNWLRFFPLGHIHIVDGDRFIRDPFPEIQKVERFLKLSPQINASNFYFNKTKGFYCLRDSGKDRCLHESKGRAHPQVDPKLLDKLHEYFREPNKKFFKLVGRTFDWH</sequence>
<reference key="1">
    <citation type="journal article" date="2000" name="Am. J. Physiol.">
        <title>Expression of N-deacetylase/sulfotransferase and 3-O-sulfotransferase in rat alveolar type II cells.</title>
        <authorList>
            <person name="Li Z.-Y."/>
            <person name="Hirayoshi K."/>
            <person name="Suzuki Y."/>
        </authorList>
    </citation>
    <scope>NUCLEOTIDE SEQUENCE [MRNA]</scope>
    <source>
        <strain>Wistar</strain>
    </source>
</reference>
<name>HS3S1_RAT</name>
<dbReference type="EC" id="2.8.2.23"/>
<dbReference type="EMBL" id="AF177430">
    <property type="protein sequence ID" value="AAG09283.1"/>
    <property type="molecule type" value="mRNA"/>
</dbReference>
<dbReference type="RefSeq" id="NP_445843.1">
    <property type="nucleotide sequence ID" value="NM_053391.1"/>
</dbReference>
<dbReference type="SMR" id="Q9ESG5"/>
<dbReference type="FunCoup" id="Q9ESG5">
    <property type="interactions" value="471"/>
</dbReference>
<dbReference type="STRING" id="10116.ENSRNOP00000068250"/>
<dbReference type="GlyCosmos" id="Q9ESG5">
    <property type="glycosylation" value="4 sites, No reported glycans"/>
</dbReference>
<dbReference type="GlyGen" id="Q9ESG5">
    <property type="glycosylation" value="4 sites"/>
</dbReference>
<dbReference type="PhosphoSitePlus" id="Q9ESG5"/>
<dbReference type="PaxDb" id="10116-ENSRNOP00000068250"/>
<dbReference type="GeneID" id="84406"/>
<dbReference type="KEGG" id="rno:84406"/>
<dbReference type="AGR" id="RGD:71084"/>
<dbReference type="CTD" id="9957"/>
<dbReference type="RGD" id="71084">
    <property type="gene designation" value="Hs3st1"/>
</dbReference>
<dbReference type="eggNOG" id="KOG3704">
    <property type="taxonomic scope" value="Eukaryota"/>
</dbReference>
<dbReference type="InParanoid" id="Q9ESG5"/>
<dbReference type="PhylomeDB" id="Q9ESG5"/>
<dbReference type="Reactome" id="R-RNO-2022928">
    <property type="pathway name" value="HS-GAG biosynthesis"/>
</dbReference>
<dbReference type="PRO" id="PR:Q9ESG5"/>
<dbReference type="Proteomes" id="UP000002494">
    <property type="component" value="Unplaced"/>
</dbReference>
<dbReference type="GO" id="GO:0005794">
    <property type="term" value="C:Golgi apparatus"/>
    <property type="evidence" value="ECO:0000266"/>
    <property type="project" value="RGD"/>
</dbReference>
<dbReference type="GO" id="GO:0005796">
    <property type="term" value="C:Golgi lumen"/>
    <property type="evidence" value="ECO:0007669"/>
    <property type="project" value="UniProtKB-SubCell"/>
</dbReference>
<dbReference type="GO" id="GO:0008467">
    <property type="term" value="F:[heparan sulfate]-glucosamine 3-sulfotransferase activity"/>
    <property type="evidence" value="ECO:0000266"/>
    <property type="project" value="RGD"/>
</dbReference>
<dbReference type="GO" id="GO:0006024">
    <property type="term" value="P:glycosaminoglycan biosynthetic process"/>
    <property type="evidence" value="ECO:0000266"/>
    <property type="project" value="RGD"/>
</dbReference>
<dbReference type="GO" id="GO:0015012">
    <property type="term" value="P:heparan sulfate proteoglycan biosynthetic process"/>
    <property type="evidence" value="ECO:0000266"/>
    <property type="project" value="RGD"/>
</dbReference>
<dbReference type="FunFam" id="3.40.50.300:FF:000674">
    <property type="entry name" value="Sulfotransferase"/>
    <property type="match status" value="1"/>
</dbReference>
<dbReference type="Gene3D" id="3.40.50.300">
    <property type="entry name" value="P-loop containing nucleotide triphosphate hydrolases"/>
    <property type="match status" value="1"/>
</dbReference>
<dbReference type="InterPro" id="IPR037359">
    <property type="entry name" value="NST/OST"/>
</dbReference>
<dbReference type="InterPro" id="IPR027417">
    <property type="entry name" value="P-loop_NTPase"/>
</dbReference>
<dbReference type="InterPro" id="IPR000863">
    <property type="entry name" value="Sulfotransferase_dom"/>
</dbReference>
<dbReference type="PANTHER" id="PTHR10605:SF16">
    <property type="entry name" value="HEPARAN SULFATE GLUCOSAMINE 3-O-SULFOTRANSFERASE 1"/>
    <property type="match status" value="1"/>
</dbReference>
<dbReference type="PANTHER" id="PTHR10605">
    <property type="entry name" value="HEPARAN SULFATE SULFOTRANSFERASE"/>
    <property type="match status" value="1"/>
</dbReference>
<dbReference type="Pfam" id="PF00685">
    <property type="entry name" value="Sulfotransfer_1"/>
    <property type="match status" value="1"/>
</dbReference>
<dbReference type="SUPFAM" id="SSF52540">
    <property type="entry name" value="P-loop containing nucleoside triphosphate hydrolases"/>
    <property type="match status" value="1"/>
</dbReference>
<feature type="signal peptide" evidence="1">
    <location>
        <begin position="1"/>
        <end position="20"/>
    </location>
</feature>
<feature type="chain" id="PRO_0000033453" description="Heparan sulfate glucosamine 3-O-sulfotransferase 1">
    <location>
        <begin position="21"/>
        <end position="311"/>
    </location>
</feature>
<feature type="binding site" evidence="1">
    <location>
        <begin position="68"/>
        <end position="72"/>
    </location>
    <ligand>
        <name>3'-phosphoadenylyl sulfate</name>
        <dbReference type="ChEBI" id="CHEBI:58339"/>
    </ligand>
</feature>
<feature type="binding site" evidence="1">
    <location>
        <position position="151"/>
    </location>
    <ligand>
        <name>3'-phosphoadenylyl sulfate</name>
        <dbReference type="ChEBI" id="CHEBI:58339"/>
    </ligand>
</feature>
<feature type="binding site" evidence="1">
    <location>
        <position position="159"/>
    </location>
    <ligand>
        <name>3'-phosphoadenylyl sulfate</name>
        <dbReference type="ChEBI" id="CHEBI:58339"/>
    </ligand>
</feature>
<feature type="binding site" evidence="1">
    <location>
        <position position="259"/>
    </location>
    <ligand>
        <name>3'-phosphoadenylyl sulfate</name>
        <dbReference type="ChEBI" id="CHEBI:58339"/>
    </ligand>
</feature>
<feature type="binding site" evidence="1">
    <location>
        <begin position="274"/>
        <end position="278"/>
    </location>
    <ligand>
        <name>3'-phosphoadenylyl sulfate</name>
        <dbReference type="ChEBI" id="CHEBI:58339"/>
    </ligand>
</feature>
<feature type="glycosylation site" description="N-linked (GlcNAc...) asparagine" evidence="2">
    <location>
        <position position="52"/>
    </location>
</feature>
<feature type="glycosylation site" description="N-linked (GlcNAc...) asparagine" evidence="2">
    <location>
        <position position="196"/>
    </location>
</feature>
<feature type="glycosylation site" description="N-linked (GlcNAc...) asparagine" evidence="2">
    <location>
        <position position="246"/>
    </location>
</feature>
<feature type="glycosylation site" description="N-linked (GlcNAc...) asparagine" evidence="2">
    <location>
        <position position="253"/>
    </location>
</feature>
<feature type="disulfide bond" evidence="1">
    <location>
        <begin position="260"/>
        <end position="269"/>
    </location>
</feature>
<gene>
    <name type="primary">Hs3st1</name>
    <name type="synonym">3ost</name>
    <name type="synonym">3ost1</name>
</gene>
<keyword id="KW-1015">Disulfide bond</keyword>
<keyword id="KW-0325">Glycoprotein</keyword>
<keyword id="KW-0333">Golgi apparatus</keyword>
<keyword id="KW-1185">Reference proteome</keyword>
<keyword id="KW-0732">Signal</keyword>
<keyword id="KW-0808">Transferase</keyword>
<evidence type="ECO:0000250" key="1"/>
<evidence type="ECO:0000255" key="2"/>
<evidence type="ECO:0000305" key="3"/>
<accession>Q9ESG5</accession>
<comment type="function">
    <text evidence="1">Sulfotransferase that utilizes 3'-phospho-5'-adenylyl sulfate (PAPS) to catalyze the transfer of a sulfo group to position 3 of glucosamine residues in heparan. Catalyzes the rate limiting step in the biosynthesis of heparan sulfate (HSact). This modification is a crucial step in the biosynthesis of anticoagulant heparan sulfate as it completes the structure of the antithrombin pentasaccharide binding site (By similarity).</text>
</comment>
<comment type="catalytic activity">
    <reaction>
        <text>alpha-D-glucosaminyl-[heparan sulfate](n) + 3'-phosphoadenylyl sulfate = 3-sulfo-alpha-D-glucosaminyl-[heparan sulfate](n) + adenosine 3',5'-bisphosphate + H(+)</text>
        <dbReference type="Rhea" id="RHEA:15461"/>
        <dbReference type="Rhea" id="RHEA-COMP:9830"/>
        <dbReference type="Rhea" id="RHEA-COMP:9831"/>
        <dbReference type="ChEBI" id="CHEBI:15378"/>
        <dbReference type="ChEBI" id="CHEBI:58339"/>
        <dbReference type="ChEBI" id="CHEBI:58343"/>
        <dbReference type="ChEBI" id="CHEBI:58388"/>
        <dbReference type="ChEBI" id="CHEBI:70975"/>
        <dbReference type="EC" id="2.8.2.23"/>
    </reaction>
</comment>
<comment type="subcellular location">
    <subcellularLocation>
        <location evidence="3">Golgi apparatus lumen</location>
    </subcellularLocation>
</comment>
<comment type="similarity">
    <text evidence="3">Belongs to the sulfotransferase 1 family.</text>
</comment>
<organism>
    <name type="scientific">Rattus norvegicus</name>
    <name type="common">Rat</name>
    <dbReference type="NCBI Taxonomy" id="10116"/>
    <lineage>
        <taxon>Eukaryota</taxon>
        <taxon>Metazoa</taxon>
        <taxon>Chordata</taxon>
        <taxon>Craniata</taxon>
        <taxon>Vertebrata</taxon>
        <taxon>Euteleostomi</taxon>
        <taxon>Mammalia</taxon>
        <taxon>Eutheria</taxon>
        <taxon>Euarchontoglires</taxon>
        <taxon>Glires</taxon>
        <taxon>Rodentia</taxon>
        <taxon>Myomorpha</taxon>
        <taxon>Muroidea</taxon>
        <taxon>Muridae</taxon>
        <taxon>Murinae</taxon>
        <taxon>Rattus</taxon>
    </lineage>
</organism>
<protein>
    <recommendedName>
        <fullName>Heparan sulfate glucosamine 3-O-sulfotransferase 1</fullName>
        <ecNumber>2.8.2.23</ecNumber>
    </recommendedName>
    <alternativeName>
        <fullName>Heparan sulfate D-glucosaminyl 3-O-sulfotransferase 1</fullName>
        <shortName>Heparan sulfate 3-O-sulfotransferase 1</shortName>
    </alternativeName>
</protein>
<proteinExistence type="evidence at transcript level"/>